<organism>
    <name type="scientific">Saccharomyces cerevisiae (strain YJM789)</name>
    <name type="common">Baker's yeast</name>
    <dbReference type="NCBI Taxonomy" id="307796"/>
    <lineage>
        <taxon>Eukaryota</taxon>
        <taxon>Fungi</taxon>
        <taxon>Dikarya</taxon>
        <taxon>Ascomycota</taxon>
        <taxon>Saccharomycotina</taxon>
        <taxon>Saccharomycetes</taxon>
        <taxon>Saccharomycetales</taxon>
        <taxon>Saccharomycetaceae</taxon>
        <taxon>Saccharomyces</taxon>
    </lineage>
</organism>
<dbReference type="EMBL" id="AAFW02000032">
    <property type="protein sequence ID" value="EDN63538.1"/>
    <property type="molecule type" value="Genomic_DNA"/>
</dbReference>
<dbReference type="SMR" id="A6ZP48"/>
<dbReference type="HOGENOM" id="CLU_025792_1_0_1"/>
<dbReference type="Proteomes" id="UP000007060">
    <property type="component" value="Unassembled WGS sequence"/>
</dbReference>
<dbReference type="GO" id="GO:0005739">
    <property type="term" value="C:mitochondrion"/>
    <property type="evidence" value="ECO:0007669"/>
    <property type="project" value="UniProtKB-SubCell"/>
</dbReference>
<dbReference type="GO" id="GO:0005525">
    <property type="term" value="F:GTP binding"/>
    <property type="evidence" value="ECO:0007669"/>
    <property type="project" value="InterPro"/>
</dbReference>
<dbReference type="CDD" id="cd01855">
    <property type="entry name" value="YqeH"/>
    <property type="match status" value="1"/>
</dbReference>
<dbReference type="Gene3D" id="3.40.50.300">
    <property type="entry name" value="P-loop containing nucleotide triphosphate hydrolases"/>
    <property type="match status" value="1"/>
</dbReference>
<dbReference type="InterPro" id="IPR030378">
    <property type="entry name" value="G_CP_dom"/>
</dbReference>
<dbReference type="InterPro" id="IPR006073">
    <property type="entry name" value="GTP-bd"/>
</dbReference>
<dbReference type="InterPro" id="IPR050896">
    <property type="entry name" value="Mito_lipid_metab_GTPase"/>
</dbReference>
<dbReference type="InterPro" id="IPR027417">
    <property type="entry name" value="P-loop_NTPase"/>
</dbReference>
<dbReference type="PANTHER" id="PTHR46434">
    <property type="entry name" value="GENETIC INTERACTOR OF PROHIBITINS 3, MITOCHONDRIAL"/>
    <property type="match status" value="1"/>
</dbReference>
<dbReference type="PANTHER" id="PTHR46434:SF1">
    <property type="entry name" value="GENETIC INTERACTOR OF PROHIBITINS 3, MITOCHONDRIAL"/>
    <property type="match status" value="1"/>
</dbReference>
<dbReference type="Pfam" id="PF01926">
    <property type="entry name" value="MMR_HSR1"/>
    <property type="match status" value="1"/>
</dbReference>
<dbReference type="SUPFAM" id="SSF52540">
    <property type="entry name" value="P-loop containing nucleoside triphosphate hydrolases"/>
    <property type="match status" value="1"/>
</dbReference>
<dbReference type="PROSITE" id="PS51721">
    <property type="entry name" value="G_CP"/>
    <property type="match status" value="1"/>
</dbReference>
<accession>A6ZP48</accession>
<keyword id="KW-0496">Mitochondrion</keyword>
<keyword id="KW-0809">Transit peptide</keyword>
<reference key="1">
    <citation type="journal article" date="2007" name="Proc. Natl. Acad. Sci. U.S.A.">
        <title>Genome sequencing and comparative analysis of Saccharomyces cerevisiae strain YJM789.</title>
        <authorList>
            <person name="Wei W."/>
            <person name="McCusker J.H."/>
            <person name="Hyman R.W."/>
            <person name="Jones T."/>
            <person name="Ning Y."/>
            <person name="Cao Z."/>
            <person name="Gu Z."/>
            <person name="Bruno D."/>
            <person name="Miranda M."/>
            <person name="Nguyen M."/>
            <person name="Wilhelmy J."/>
            <person name="Komp C."/>
            <person name="Tamse R."/>
            <person name="Wang X."/>
            <person name="Jia P."/>
            <person name="Luedi P."/>
            <person name="Oefner P.J."/>
            <person name="David L."/>
            <person name="Dietrich F.S."/>
            <person name="Li Y."/>
            <person name="Davis R.W."/>
            <person name="Steinmetz L.M."/>
        </authorList>
    </citation>
    <scope>NUCLEOTIDE SEQUENCE [LARGE SCALE GENOMIC DNA]</scope>
    <source>
        <strain>YJM789</strain>
    </source>
</reference>
<proteinExistence type="inferred from homology"/>
<evidence type="ECO:0000250" key="1"/>
<evidence type="ECO:0000255" key="2"/>
<evidence type="ECO:0000255" key="3">
    <source>
        <dbReference type="PROSITE-ProRule" id="PRU01058"/>
    </source>
</evidence>
<gene>
    <name type="primary">GEP3</name>
    <name type="synonym">AIM40</name>
    <name type="synonym">FMP48</name>
    <name type="ORF">SCY_5263</name>
</gene>
<sequence length="556" mass="63866">MLNLCHALRGVRQFSCSVIVKVKCASCSIKLQDQDPSKPGYYTKPKSLPDSKLNPDLQDLKYLLFSQDIQLSKQAIQNDPDLKTKRDLLLRVICKRCSNALHHNNYNPEEFPESTLNDILNYVPRGSNVMHIVPFVEFPLHLDPNVLKRNDLDTTLVLTKSDQVFKDKNAVSKKVPIFMKQFLKNTLRIDSNKTFAISALKNWNISMFYNYFKNYTYLLGNPNVGKSTLINTLLQKYLGYKVKIDSTGKINSPSEEVMQEAFTNPKNFFKIQAAGVSHIPNLTRSVQAYQVGGKILFDLPGYSTSTSRLRLEELIDERWLQRLRKTDLFNRKHIKQKTYESMKGTSQGGCYTVGGIFYLVPPKGSINQIVKYIPGPSKTFKNIEKGIDVFNSCNSSSGTHPLSRYCGIKSVICEKSQYKRYAIPPFIGSIEIVLKDIGYILLRTTGRYEFKGLHEIWIPRGIQVGIREPLENLIESGYQRYIETNGKESSCPRDRPIISSLYEMAPDEADTLNAVKKSYLEKTEKDLSARRFVDDDPYDLVQHLEKKKNPYWYYQW</sequence>
<feature type="transit peptide" description="Mitochondrion" evidence="2">
    <location>
        <begin position="1"/>
        <end position="21"/>
    </location>
</feature>
<feature type="chain" id="PRO_0000409645" description="Genetic interactor of prohibitins 3, mitochondrial">
    <location>
        <begin position="22"/>
        <end position="556"/>
    </location>
</feature>
<feature type="domain" description="CP-type G" evidence="3">
    <location>
        <begin position="113"/>
        <end position="305"/>
    </location>
</feature>
<protein>
    <recommendedName>
        <fullName>Genetic interactor of prohibitins 3, mitochondrial</fullName>
    </recommendedName>
    <alternativeName>
        <fullName>Altered inheritance of mitochondria protein 40</fullName>
    </alternativeName>
    <alternativeName>
        <fullName>Found in mitochondrial proteome protein 38</fullName>
    </alternativeName>
</protein>
<comment type="function">
    <text evidence="1">Interacts genetically with prohibitins and thus may be involved in the mitochondrial lipid metabolism.</text>
</comment>
<comment type="subcellular location">
    <subcellularLocation>
        <location evidence="1">Mitochondrion</location>
    </subcellularLocation>
</comment>
<comment type="similarity">
    <text evidence="3">Belongs to the TRAFAC class YlqF/YawG GTPase family. GEP3 subfamily.</text>
</comment>
<name>GEP3_YEAS7</name>